<protein>
    <recommendedName>
        <fullName evidence="1">Ribosomal RNA small subunit methyltransferase G</fullName>
        <ecNumber evidence="1">2.1.1.170</ecNumber>
    </recommendedName>
    <alternativeName>
        <fullName evidence="1">16S rRNA 7-methylguanosine methyltransferase</fullName>
        <shortName evidence="1">16S rRNA m7G methyltransferase</shortName>
    </alternativeName>
</protein>
<name>RSMG_MAGMM</name>
<dbReference type="EC" id="2.1.1.170" evidence="1"/>
<dbReference type="EMBL" id="CP000471">
    <property type="protein sequence ID" value="ABK46239.1"/>
    <property type="molecule type" value="Genomic_DNA"/>
</dbReference>
<dbReference type="SMR" id="A0LE46"/>
<dbReference type="STRING" id="156889.Mmc1_3754"/>
<dbReference type="KEGG" id="mgm:Mmc1_3754"/>
<dbReference type="eggNOG" id="COG0357">
    <property type="taxonomic scope" value="Bacteria"/>
</dbReference>
<dbReference type="HOGENOM" id="CLU_065341_2_0_5"/>
<dbReference type="Proteomes" id="UP000002586">
    <property type="component" value="Chromosome"/>
</dbReference>
<dbReference type="GO" id="GO:0005829">
    <property type="term" value="C:cytosol"/>
    <property type="evidence" value="ECO:0007669"/>
    <property type="project" value="TreeGrafter"/>
</dbReference>
<dbReference type="GO" id="GO:0070043">
    <property type="term" value="F:rRNA (guanine-N7-)-methyltransferase activity"/>
    <property type="evidence" value="ECO:0007669"/>
    <property type="project" value="UniProtKB-UniRule"/>
</dbReference>
<dbReference type="CDD" id="cd02440">
    <property type="entry name" value="AdoMet_MTases"/>
    <property type="match status" value="1"/>
</dbReference>
<dbReference type="Gene3D" id="3.40.50.150">
    <property type="entry name" value="Vaccinia Virus protein VP39"/>
    <property type="match status" value="1"/>
</dbReference>
<dbReference type="HAMAP" id="MF_00074">
    <property type="entry name" value="16SrRNA_methyltr_G"/>
    <property type="match status" value="1"/>
</dbReference>
<dbReference type="InterPro" id="IPR003682">
    <property type="entry name" value="rRNA_ssu_MeTfrase_G"/>
</dbReference>
<dbReference type="InterPro" id="IPR029063">
    <property type="entry name" value="SAM-dependent_MTases_sf"/>
</dbReference>
<dbReference type="NCBIfam" id="TIGR00138">
    <property type="entry name" value="rsmG_gidB"/>
    <property type="match status" value="1"/>
</dbReference>
<dbReference type="PANTHER" id="PTHR31760">
    <property type="entry name" value="S-ADENOSYL-L-METHIONINE-DEPENDENT METHYLTRANSFERASES SUPERFAMILY PROTEIN"/>
    <property type="match status" value="1"/>
</dbReference>
<dbReference type="PANTHER" id="PTHR31760:SF0">
    <property type="entry name" value="S-ADENOSYL-L-METHIONINE-DEPENDENT METHYLTRANSFERASES SUPERFAMILY PROTEIN"/>
    <property type="match status" value="1"/>
</dbReference>
<dbReference type="Pfam" id="PF02527">
    <property type="entry name" value="GidB"/>
    <property type="match status" value="1"/>
</dbReference>
<dbReference type="PIRSF" id="PIRSF003078">
    <property type="entry name" value="GidB"/>
    <property type="match status" value="1"/>
</dbReference>
<dbReference type="SUPFAM" id="SSF53335">
    <property type="entry name" value="S-adenosyl-L-methionine-dependent methyltransferases"/>
    <property type="match status" value="1"/>
</dbReference>
<evidence type="ECO:0000255" key="1">
    <source>
        <dbReference type="HAMAP-Rule" id="MF_00074"/>
    </source>
</evidence>
<organism>
    <name type="scientific">Magnetococcus marinus (strain ATCC BAA-1437 / JCM 17883 / MC-1)</name>
    <dbReference type="NCBI Taxonomy" id="156889"/>
    <lineage>
        <taxon>Bacteria</taxon>
        <taxon>Pseudomonadati</taxon>
        <taxon>Pseudomonadota</taxon>
        <taxon>Alphaproteobacteria</taxon>
        <taxon>Magnetococcales</taxon>
        <taxon>Magnetococcaceae</taxon>
        <taxon>Magnetococcus</taxon>
    </lineage>
</organism>
<comment type="function">
    <text evidence="1">Specifically methylates the N7 position of guanine in position 527 of 16S rRNA.</text>
</comment>
<comment type="catalytic activity">
    <reaction evidence="1">
        <text>guanosine(527) in 16S rRNA + S-adenosyl-L-methionine = N(7)-methylguanosine(527) in 16S rRNA + S-adenosyl-L-homocysteine</text>
        <dbReference type="Rhea" id="RHEA:42732"/>
        <dbReference type="Rhea" id="RHEA-COMP:10209"/>
        <dbReference type="Rhea" id="RHEA-COMP:10210"/>
        <dbReference type="ChEBI" id="CHEBI:57856"/>
        <dbReference type="ChEBI" id="CHEBI:59789"/>
        <dbReference type="ChEBI" id="CHEBI:74269"/>
        <dbReference type="ChEBI" id="CHEBI:74480"/>
        <dbReference type="EC" id="2.1.1.170"/>
    </reaction>
</comment>
<comment type="subcellular location">
    <subcellularLocation>
        <location evidence="1">Cytoplasm</location>
    </subcellularLocation>
</comment>
<comment type="similarity">
    <text evidence="1">Belongs to the methyltransferase superfamily. RNA methyltransferase RsmG family.</text>
</comment>
<reference key="1">
    <citation type="journal article" date="2009" name="Appl. Environ. Microbiol.">
        <title>Complete genome sequence of the chemolithoautotrophic marine magnetotactic coccus strain MC-1.</title>
        <authorList>
            <person name="Schubbe S."/>
            <person name="Williams T.J."/>
            <person name="Xie G."/>
            <person name="Kiss H.E."/>
            <person name="Brettin T.S."/>
            <person name="Martinez D."/>
            <person name="Ross C.A."/>
            <person name="Schuler D."/>
            <person name="Cox B.L."/>
            <person name="Nealson K.H."/>
            <person name="Bazylinski D.A."/>
        </authorList>
    </citation>
    <scope>NUCLEOTIDE SEQUENCE [LARGE SCALE GENOMIC DNA]</scope>
    <source>
        <strain>ATCC BAA-1437 / JCM 17883 / MC-1</strain>
    </source>
</reference>
<keyword id="KW-0963">Cytoplasm</keyword>
<keyword id="KW-0489">Methyltransferase</keyword>
<keyword id="KW-1185">Reference proteome</keyword>
<keyword id="KW-0698">rRNA processing</keyword>
<keyword id="KW-0949">S-adenosyl-L-methionine</keyword>
<keyword id="KW-0808">Transferase</keyword>
<feature type="chain" id="PRO_0000335367" description="Ribosomal RNA small subunit methyltransferase G">
    <location>
        <begin position="1"/>
        <end position="219"/>
    </location>
</feature>
<feature type="binding site" evidence="1">
    <location>
        <position position="81"/>
    </location>
    <ligand>
        <name>S-adenosyl-L-methionine</name>
        <dbReference type="ChEBI" id="CHEBI:59789"/>
    </ligand>
</feature>
<feature type="binding site" evidence="1">
    <location>
        <position position="86"/>
    </location>
    <ligand>
        <name>S-adenosyl-L-methionine</name>
        <dbReference type="ChEBI" id="CHEBI:59789"/>
    </ligand>
</feature>
<feature type="binding site" evidence="1">
    <location>
        <position position="150"/>
    </location>
    <ligand>
        <name>S-adenosyl-L-methionine</name>
        <dbReference type="ChEBI" id="CHEBI:59789"/>
    </ligand>
</feature>
<gene>
    <name evidence="1" type="primary">rsmG</name>
    <name type="ordered locus">Mmc1_3754</name>
</gene>
<accession>A0LE46</accession>
<proteinExistence type="inferred from homology"/>
<sequence>MENFRYEIESMLQLVGVDMDVISVDPYSDEKLAEFVSELLLWNKKINLIGKSTEKSIWSRHIAESLILLPYVQGSTVLDMGTGAGLPGLPLQIVSGSNIEMHLVEKDQKKVSFLKHVSANLNLKNIRIYNKQFTEKGFDGAPLVNVVTSRALAEINQLVAWADPCLVNGGSLVLIKGPVCKAELEKFEESDLSDKYENGEIVEYKIDSHDVNIVIIKKK</sequence>